<sequence>MILIKNGRVIDPKSQRDENIDLIIKENKIYKIGKFDESDEYEKIIDASGNVVAPGLVDVHVHFRDPGFTYKEDIESGAKSAARGGFTTVICMANTNPIVDNEDTFNYVKEKSKNACINVLQAAAITKGFEGKELVDMEALKKAGVPGFTDDGLPLMDSNLIMEAMIKAKELDVPLSFHEEDPSLVGNPGVNAGKVASELGLKGASSVAEDVMVARDCMLALKTGAKVDIQHISSGVSVDMVRFAKYLGATVVAEASPHHFTLTEEDVLEFGTNAKMNPPLRSKWDRDKIIEGLNDGTIEIIATDHAPHSKEEKDREFIKAPSGIIGLETSLALGITNLVHKNHLSMMQLIEKMSINPAKLYNLNIGFIEEGAVADIVIFNPEEEWTVESFVSKADNSPFKGKSLYGKVNYTICNGEIVYNA</sequence>
<evidence type="ECO:0000255" key="1">
    <source>
        <dbReference type="HAMAP-Rule" id="MF_00220"/>
    </source>
</evidence>
<name>PYRC_CLOD6</name>
<accession>Q18C47</accession>
<reference key="1">
    <citation type="journal article" date="2006" name="Nat. Genet.">
        <title>The multidrug-resistant human pathogen Clostridium difficile has a highly mobile, mosaic genome.</title>
        <authorList>
            <person name="Sebaihia M."/>
            <person name="Wren B.W."/>
            <person name="Mullany P."/>
            <person name="Fairweather N.F."/>
            <person name="Minton N."/>
            <person name="Stabler R."/>
            <person name="Thomson N.R."/>
            <person name="Roberts A.P."/>
            <person name="Cerdeno-Tarraga A.M."/>
            <person name="Wang H."/>
            <person name="Holden M.T.G."/>
            <person name="Wright A."/>
            <person name="Churcher C."/>
            <person name="Quail M.A."/>
            <person name="Baker S."/>
            <person name="Bason N."/>
            <person name="Brooks K."/>
            <person name="Chillingworth T."/>
            <person name="Cronin A."/>
            <person name="Davis P."/>
            <person name="Dowd L."/>
            <person name="Fraser A."/>
            <person name="Feltwell T."/>
            <person name="Hance Z."/>
            <person name="Holroyd S."/>
            <person name="Jagels K."/>
            <person name="Moule S."/>
            <person name="Mungall K."/>
            <person name="Price C."/>
            <person name="Rabbinowitsch E."/>
            <person name="Sharp S."/>
            <person name="Simmonds M."/>
            <person name="Stevens K."/>
            <person name="Unwin L."/>
            <person name="Whithead S."/>
            <person name="Dupuy B."/>
            <person name="Dougan G."/>
            <person name="Barrell B."/>
            <person name="Parkhill J."/>
        </authorList>
    </citation>
    <scope>NUCLEOTIDE SEQUENCE [LARGE SCALE GENOMIC DNA]</scope>
    <source>
        <strain>630</strain>
    </source>
</reference>
<comment type="function">
    <text evidence="1">Catalyzes the reversible cyclization of carbamoyl aspartate to dihydroorotate.</text>
</comment>
<comment type="catalytic activity">
    <reaction evidence="1">
        <text>(S)-dihydroorotate + H2O = N-carbamoyl-L-aspartate + H(+)</text>
        <dbReference type="Rhea" id="RHEA:24296"/>
        <dbReference type="ChEBI" id="CHEBI:15377"/>
        <dbReference type="ChEBI" id="CHEBI:15378"/>
        <dbReference type="ChEBI" id="CHEBI:30864"/>
        <dbReference type="ChEBI" id="CHEBI:32814"/>
        <dbReference type="EC" id="3.5.2.3"/>
    </reaction>
</comment>
<comment type="cofactor">
    <cofactor evidence="1">
        <name>Zn(2+)</name>
        <dbReference type="ChEBI" id="CHEBI:29105"/>
    </cofactor>
    <text evidence="1">Binds 2 Zn(2+) ions per subunit.</text>
</comment>
<comment type="pathway">
    <text evidence="1">Pyrimidine metabolism; UMP biosynthesis via de novo pathway; (S)-dihydroorotate from bicarbonate: step 3/3.</text>
</comment>
<comment type="similarity">
    <text evidence="1">Belongs to the metallo-dependent hydrolases superfamily. DHOase family. Class I DHOase subfamily.</text>
</comment>
<protein>
    <recommendedName>
        <fullName evidence="1">Dihydroorotase</fullName>
        <shortName evidence="1">DHOase</shortName>
        <ecNumber evidence="1">3.5.2.3</ecNumber>
    </recommendedName>
</protein>
<proteinExistence type="inferred from homology"/>
<gene>
    <name evidence="1" type="primary">pyrC</name>
    <name type="ordered locus">CD630_15260</name>
</gene>
<organism>
    <name type="scientific">Clostridioides difficile (strain 630)</name>
    <name type="common">Peptoclostridium difficile</name>
    <dbReference type="NCBI Taxonomy" id="272563"/>
    <lineage>
        <taxon>Bacteria</taxon>
        <taxon>Bacillati</taxon>
        <taxon>Bacillota</taxon>
        <taxon>Clostridia</taxon>
        <taxon>Peptostreptococcales</taxon>
        <taxon>Peptostreptococcaceae</taxon>
        <taxon>Clostridioides</taxon>
    </lineage>
</organism>
<dbReference type="EC" id="3.5.2.3" evidence="1"/>
<dbReference type="EMBL" id="AM180355">
    <property type="protein sequence ID" value="CAJ68391.1"/>
    <property type="molecule type" value="Genomic_DNA"/>
</dbReference>
<dbReference type="RefSeq" id="WP_011861243.1">
    <property type="nucleotide sequence ID" value="NZ_JAUPES010000019.1"/>
</dbReference>
<dbReference type="RefSeq" id="YP_001088027.1">
    <property type="nucleotide sequence ID" value="NC_009089.1"/>
</dbReference>
<dbReference type="SMR" id="Q18C47"/>
<dbReference type="STRING" id="272563.CD630_15260"/>
<dbReference type="EnsemblBacteria" id="CAJ68391">
    <property type="protein sequence ID" value="CAJ68391"/>
    <property type="gene ID" value="CD630_15260"/>
</dbReference>
<dbReference type="KEGG" id="cdf:CD630_15260"/>
<dbReference type="KEGG" id="pdc:CDIF630_01694"/>
<dbReference type="PATRIC" id="fig|272563.120.peg.1599"/>
<dbReference type="eggNOG" id="COG0044">
    <property type="taxonomic scope" value="Bacteria"/>
</dbReference>
<dbReference type="OrthoDB" id="9765462at2"/>
<dbReference type="PhylomeDB" id="Q18C47"/>
<dbReference type="BioCyc" id="PDIF272563:G12WB-1664-MONOMER"/>
<dbReference type="UniPathway" id="UPA00070">
    <property type="reaction ID" value="UER00117"/>
</dbReference>
<dbReference type="Proteomes" id="UP000001978">
    <property type="component" value="Chromosome"/>
</dbReference>
<dbReference type="GO" id="GO:0005737">
    <property type="term" value="C:cytoplasm"/>
    <property type="evidence" value="ECO:0007669"/>
    <property type="project" value="TreeGrafter"/>
</dbReference>
<dbReference type="GO" id="GO:0004038">
    <property type="term" value="F:allantoinase activity"/>
    <property type="evidence" value="ECO:0007669"/>
    <property type="project" value="TreeGrafter"/>
</dbReference>
<dbReference type="GO" id="GO:0004151">
    <property type="term" value="F:dihydroorotase activity"/>
    <property type="evidence" value="ECO:0007669"/>
    <property type="project" value="UniProtKB-UniRule"/>
</dbReference>
<dbReference type="GO" id="GO:0008270">
    <property type="term" value="F:zinc ion binding"/>
    <property type="evidence" value="ECO:0007669"/>
    <property type="project" value="UniProtKB-UniRule"/>
</dbReference>
<dbReference type="GO" id="GO:0044205">
    <property type="term" value="P:'de novo' UMP biosynthetic process"/>
    <property type="evidence" value="ECO:0007669"/>
    <property type="project" value="UniProtKB-UniRule"/>
</dbReference>
<dbReference type="GO" id="GO:0006145">
    <property type="term" value="P:purine nucleobase catabolic process"/>
    <property type="evidence" value="ECO:0007669"/>
    <property type="project" value="TreeGrafter"/>
</dbReference>
<dbReference type="CDD" id="cd01317">
    <property type="entry name" value="DHOase_IIa"/>
    <property type="match status" value="1"/>
</dbReference>
<dbReference type="Gene3D" id="3.20.20.140">
    <property type="entry name" value="Metal-dependent hydrolases"/>
    <property type="match status" value="1"/>
</dbReference>
<dbReference type="HAMAP" id="MF_00220_B">
    <property type="entry name" value="PyrC_classI_B"/>
    <property type="match status" value="1"/>
</dbReference>
<dbReference type="InterPro" id="IPR006680">
    <property type="entry name" value="Amidohydro-rel"/>
</dbReference>
<dbReference type="InterPro" id="IPR004722">
    <property type="entry name" value="DHOase"/>
</dbReference>
<dbReference type="InterPro" id="IPR050138">
    <property type="entry name" value="DHOase/Allantoinase_Hydrolase"/>
</dbReference>
<dbReference type="InterPro" id="IPR002195">
    <property type="entry name" value="Dihydroorotase_CS"/>
</dbReference>
<dbReference type="InterPro" id="IPR011059">
    <property type="entry name" value="Metal-dep_hydrolase_composite"/>
</dbReference>
<dbReference type="InterPro" id="IPR032466">
    <property type="entry name" value="Metal_Hydrolase"/>
</dbReference>
<dbReference type="NCBIfam" id="NF006839">
    <property type="entry name" value="PRK09357.1-4"/>
    <property type="match status" value="1"/>
</dbReference>
<dbReference type="NCBIfam" id="TIGR00857">
    <property type="entry name" value="pyrC_multi"/>
    <property type="match status" value="1"/>
</dbReference>
<dbReference type="PANTHER" id="PTHR43668">
    <property type="entry name" value="ALLANTOINASE"/>
    <property type="match status" value="1"/>
</dbReference>
<dbReference type="PANTHER" id="PTHR43668:SF2">
    <property type="entry name" value="ALLANTOINASE"/>
    <property type="match status" value="1"/>
</dbReference>
<dbReference type="Pfam" id="PF01979">
    <property type="entry name" value="Amidohydro_1"/>
    <property type="match status" value="1"/>
</dbReference>
<dbReference type="SUPFAM" id="SSF51338">
    <property type="entry name" value="Composite domain of metallo-dependent hydrolases"/>
    <property type="match status" value="1"/>
</dbReference>
<dbReference type="SUPFAM" id="SSF51556">
    <property type="entry name" value="Metallo-dependent hydrolases"/>
    <property type="match status" value="1"/>
</dbReference>
<dbReference type="PROSITE" id="PS00482">
    <property type="entry name" value="DIHYDROOROTASE_1"/>
    <property type="match status" value="1"/>
</dbReference>
<dbReference type="PROSITE" id="PS00483">
    <property type="entry name" value="DIHYDROOROTASE_2"/>
    <property type="match status" value="1"/>
</dbReference>
<feature type="chain" id="PRO_1000024080" description="Dihydroorotase">
    <location>
        <begin position="1"/>
        <end position="421"/>
    </location>
</feature>
<feature type="active site" evidence="1">
    <location>
        <position position="304"/>
    </location>
</feature>
<feature type="binding site" evidence="1">
    <location>
        <position position="60"/>
    </location>
    <ligand>
        <name>Zn(2+)</name>
        <dbReference type="ChEBI" id="CHEBI:29105"/>
        <label>1</label>
    </ligand>
</feature>
<feature type="binding site" evidence="1">
    <location>
        <begin position="62"/>
        <end position="64"/>
    </location>
    <ligand>
        <name>substrate</name>
    </ligand>
</feature>
<feature type="binding site" evidence="1">
    <location>
        <position position="62"/>
    </location>
    <ligand>
        <name>Zn(2+)</name>
        <dbReference type="ChEBI" id="CHEBI:29105"/>
        <label>1</label>
    </ligand>
</feature>
<feature type="binding site" evidence="1">
    <location>
        <position position="94"/>
    </location>
    <ligand>
        <name>substrate</name>
    </ligand>
</feature>
<feature type="binding site" evidence="1">
    <location>
        <position position="151"/>
    </location>
    <ligand>
        <name>Zn(2+)</name>
        <dbReference type="ChEBI" id="CHEBI:29105"/>
        <label>1</label>
    </ligand>
</feature>
<feature type="binding site" evidence="1">
    <location>
        <position position="151"/>
    </location>
    <ligand>
        <name>Zn(2+)</name>
        <dbReference type="ChEBI" id="CHEBI:29105"/>
        <label>2</label>
    </ligand>
</feature>
<feature type="binding site" evidence="1">
    <location>
        <position position="178"/>
    </location>
    <ligand>
        <name>Zn(2+)</name>
        <dbReference type="ChEBI" id="CHEBI:29105"/>
        <label>2</label>
    </ligand>
</feature>
<feature type="binding site" evidence="1">
    <location>
        <position position="231"/>
    </location>
    <ligand>
        <name>Zn(2+)</name>
        <dbReference type="ChEBI" id="CHEBI:29105"/>
        <label>2</label>
    </ligand>
</feature>
<feature type="binding site" evidence="1">
    <location>
        <position position="277"/>
    </location>
    <ligand>
        <name>substrate</name>
    </ligand>
</feature>
<feature type="binding site" evidence="1">
    <location>
        <position position="304"/>
    </location>
    <ligand>
        <name>Zn(2+)</name>
        <dbReference type="ChEBI" id="CHEBI:29105"/>
        <label>1</label>
    </ligand>
</feature>
<feature type="binding site" evidence="1">
    <location>
        <position position="308"/>
    </location>
    <ligand>
        <name>substrate</name>
    </ligand>
</feature>
<keyword id="KW-0378">Hydrolase</keyword>
<keyword id="KW-0479">Metal-binding</keyword>
<keyword id="KW-0665">Pyrimidine biosynthesis</keyword>
<keyword id="KW-1185">Reference proteome</keyword>
<keyword id="KW-0862">Zinc</keyword>